<accession>Q12X17</accession>
<comment type="function">
    <text evidence="1">May catalyze the biosynthesis of dTMP using an unknown cosubstrate.</text>
</comment>
<comment type="pathway">
    <text evidence="1">Pyrimidine metabolism; dTTP biosynthesis.</text>
</comment>
<comment type="subunit">
    <text evidence="1">Monomer.</text>
</comment>
<comment type="subcellular location">
    <subcellularLocation>
        <location evidence="1">Cytoplasm</location>
    </subcellularLocation>
</comment>
<comment type="similarity">
    <text evidence="1">Belongs to the thymidylate synthase family. Archaeal-type ThyA subfamily.</text>
</comment>
<evidence type="ECO:0000255" key="1">
    <source>
        <dbReference type="HAMAP-Rule" id="MF_01686"/>
    </source>
</evidence>
<keyword id="KW-0963">Cytoplasm</keyword>
<keyword id="KW-0489">Methyltransferase</keyword>
<keyword id="KW-0545">Nucleotide biosynthesis</keyword>
<keyword id="KW-0808">Transferase</keyword>
<dbReference type="EC" id="2.1.1.-" evidence="1"/>
<dbReference type="EMBL" id="CP000300">
    <property type="protein sequence ID" value="ABE52009.1"/>
    <property type="molecule type" value="Genomic_DNA"/>
</dbReference>
<dbReference type="RefSeq" id="WP_011499157.1">
    <property type="nucleotide sequence ID" value="NC_007955.1"/>
</dbReference>
<dbReference type="SMR" id="Q12X17"/>
<dbReference type="STRING" id="259564.Mbur_1079"/>
<dbReference type="GeneID" id="3998016"/>
<dbReference type="KEGG" id="mbu:Mbur_1079"/>
<dbReference type="HOGENOM" id="CLU_084975_0_0_2"/>
<dbReference type="OrthoDB" id="50118at2157"/>
<dbReference type="UniPathway" id="UPA00575"/>
<dbReference type="Proteomes" id="UP000001979">
    <property type="component" value="Chromosome"/>
</dbReference>
<dbReference type="GO" id="GO:0005829">
    <property type="term" value="C:cytosol"/>
    <property type="evidence" value="ECO:0007669"/>
    <property type="project" value="TreeGrafter"/>
</dbReference>
<dbReference type="GO" id="GO:0004799">
    <property type="term" value="F:thymidylate synthase activity"/>
    <property type="evidence" value="ECO:0007669"/>
    <property type="project" value="UniProtKB-UniRule"/>
</dbReference>
<dbReference type="GO" id="GO:0006231">
    <property type="term" value="P:dTMP biosynthetic process"/>
    <property type="evidence" value="ECO:0007669"/>
    <property type="project" value="UniProtKB-UniRule"/>
</dbReference>
<dbReference type="GO" id="GO:0006235">
    <property type="term" value="P:dTTP biosynthetic process"/>
    <property type="evidence" value="ECO:0007669"/>
    <property type="project" value="UniProtKB-UniRule"/>
</dbReference>
<dbReference type="GO" id="GO:0032259">
    <property type="term" value="P:methylation"/>
    <property type="evidence" value="ECO:0007669"/>
    <property type="project" value="UniProtKB-KW"/>
</dbReference>
<dbReference type="CDD" id="cd00351">
    <property type="entry name" value="TS_Pyrimidine_HMase"/>
    <property type="match status" value="1"/>
</dbReference>
<dbReference type="Gene3D" id="3.30.572.10">
    <property type="entry name" value="Thymidylate synthase/dCMP hydroxymethylase domain"/>
    <property type="match status" value="1"/>
</dbReference>
<dbReference type="HAMAP" id="MF_01686">
    <property type="entry name" value="Thymidy_synth_arch"/>
    <property type="match status" value="1"/>
</dbReference>
<dbReference type="InterPro" id="IPR045097">
    <property type="entry name" value="Thymidate_synth/dCMP_Mease"/>
</dbReference>
<dbReference type="InterPro" id="IPR023451">
    <property type="entry name" value="Thymidate_synth/dCMP_Mease_dom"/>
</dbReference>
<dbReference type="InterPro" id="IPR036926">
    <property type="entry name" value="Thymidate_synth/dCMP_Mease_sf"/>
</dbReference>
<dbReference type="InterPro" id="IPR014620">
    <property type="entry name" value="Thymidylate_synthase_arc"/>
</dbReference>
<dbReference type="NCBIfam" id="TIGR03283">
    <property type="entry name" value="thy_syn_methano"/>
    <property type="match status" value="1"/>
</dbReference>
<dbReference type="PANTHER" id="PTHR11548">
    <property type="entry name" value="THYMIDYLATE SYNTHASE 1"/>
    <property type="match status" value="1"/>
</dbReference>
<dbReference type="PANTHER" id="PTHR11548:SF1">
    <property type="entry name" value="THYMIDYLATE SYNTHASE 1"/>
    <property type="match status" value="1"/>
</dbReference>
<dbReference type="Pfam" id="PF00303">
    <property type="entry name" value="Thymidylat_synt"/>
    <property type="match status" value="1"/>
</dbReference>
<dbReference type="PIRSF" id="PIRSF036752">
    <property type="entry name" value="TSase_MJ051"/>
    <property type="match status" value="1"/>
</dbReference>
<dbReference type="SUPFAM" id="SSF55831">
    <property type="entry name" value="Thymidylate synthase/dCMP hydroxymethylase"/>
    <property type="match status" value="1"/>
</dbReference>
<name>TYSY_METBU</name>
<protein>
    <recommendedName>
        <fullName evidence="1">Putative thymidylate synthase</fullName>
        <shortName evidence="1">TS</shortName>
        <shortName evidence="1">TSase</shortName>
        <ecNumber evidence="1">2.1.1.-</ecNumber>
    </recommendedName>
</protein>
<reference key="1">
    <citation type="journal article" date="2009" name="ISME J.">
        <title>The genome sequence of the psychrophilic archaeon, Methanococcoides burtonii: the role of genome evolution in cold adaptation.</title>
        <authorList>
            <person name="Allen M.A."/>
            <person name="Lauro F.M."/>
            <person name="Williams T.J."/>
            <person name="Burg D."/>
            <person name="Siddiqui K.S."/>
            <person name="De Francisci D."/>
            <person name="Chong K.W."/>
            <person name="Pilak O."/>
            <person name="Chew H.H."/>
            <person name="De Maere M.Z."/>
            <person name="Ting L."/>
            <person name="Katrib M."/>
            <person name="Ng C."/>
            <person name="Sowers K.R."/>
            <person name="Galperin M.Y."/>
            <person name="Anderson I.J."/>
            <person name="Ivanova N."/>
            <person name="Dalin E."/>
            <person name="Martinez M."/>
            <person name="Lapidus A."/>
            <person name="Hauser L."/>
            <person name="Land M."/>
            <person name="Thomas T."/>
            <person name="Cavicchioli R."/>
        </authorList>
    </citation>
    <scope>NUCLEOTIDE SEQUENCE [LARGE SCALE GENOMIC DNA]</scope>
    <source>
        <strain>DSM 6242 / NBRC 107633 / OCM 468 / ACE-M</strain>
    </source>
</reference>
<organism>
    <name type="scientific">Methanococcoides burtonii (strain DSM 6242 / NBRC 107633 / OCM 468 / ACE-M)</name>
    <dbReference type="NCBI Taxonomy" id="259564"/>
    <lineage>
        <taxon>Archaea</taxon>
        <taxon>Methanobacteriati</taxon>
        <taxon>Methanobacteriota</taxon>
        <taxon>Stenosarchaea group</taxon>
        <taxon>Methanomicrobia</taxon>
        <taxon>Methanosarcinales</taxon>
        <taxon>Methanosarcinaceae</taxon>
        <taxon>Methanococcoides</taxon>
    </lineage>
</organism>
<proteinExistence type="inferred from homology"/>
<gene>
    <name evidence="1" type="primary">thyA</name>
    <name type="ordered locus">Mbur_1079</name>
</gene>
<feature type="chain" id="PRO_1000000626" description="Putative thymidylate synthase">
    <location>
        <begin position="1"/>
        <end position="217"/>
    </location>
</feature>
<feature type="active site" evidence="1">
    <location>
        <position position="139"/>
    </location>
</feature>
<sequence length="217" mass="24953">MTHDAAIGRLIKARTISDAWYRGLNVIWNHGSLITDERGSQIREFMNLMVVIEDPYSNEIPEDSAWNHERLEEYAKQLITGENAQDFEYTYGQRLRNWDGKVDQIEYVIEKLTNNKTTRRATAVTWVPTIDTKVDEVPCMIIDDFKIRDDTVHLTTLFRSHDFAGAYPANLYGLSKLLEYVADKVGLAPGTITTMSVSAHIYDHDWDKIEKIIKGVQ</sequence>